<name>T2BF_BACIU</name>
<proteinExistence type="evidence at protein level"/>
<evidence type="ECO:0000269" key="1">
    <source>
    </source>
</evidence>
<evidence type="ECO:0000303" key="2">
    <source>
    </source>
</evidence>
<evidence type="ECO:0000303" key="3">
    <source>
    </source>
</evidence>
<evidence type="ECO:0000305" key="4">
    <source>
    </source>
</evidence>
<reference key="1">
    <citation type="journal article" date="1991" name="Nucleic Acids Res.">
        <title>Cloning, characterization and evolution of the BsuFI restriction endonuclease gene of Bacillus subtilis and purification of the enzyme.</title>
        <authorList>
            <person name="Kapfer W."/>
            <person name="Walter J."/>
            <person name="Trautner T.A."/>
        </authorList>
    </citation>
    <scope>NUCLEOTIDE SEQUENCE [GENOMIC DNA]</scope>
    <scope>PROTEIN SEQUENCE OF 1-13</scope>
    <scope>FUNCTION</scope>
    <scope>CATALYTIC ACTIVITY</scope>
    <scope>SUBUNIT</scope>
    <source>
        <strain>ISF18</strain>
    </source>
</reference>
<reference key="2">
    <citation type="journal article" date="2003" name="Nucleic Acids Res.">
        <title>A nomenclature for restriction enzymes, DNA methyltransferases, homing endonucleases and their genes.</title>
        <authorList>
            <person name="Roberts R.J."/>
            <person name="Belfort M."/>
            <person name="Bestor T."/>
            <person name="Bhagwat A.S."/>
            <person name="Bickle T.A."/>
            <person name="Bitinaite J."/>
            <person name="Blumenthal R.M."/>
            <person name="Degtyarev S.K."/>
            <person name="Dryden D.T."/>
            <person name="Dybvig K."/>
            <person name="Firman K."/>
            <person name="Gromova E.S."/>
            <person name="Gumport R.I."/>
            <person name="Halford S.E."/>
            <person name="Hattman S."/>
            <person name="Heitman J."/>
            <person name="Hornby D.P."/>
            <person name="Janulaitis A."/>
            <person name="Jeltsch A."/>
            <person name="Josephsen J."/>
            <person name="Kiss A."/>
            <person name="Klaenhammer T.R."/>
            <person name="Kobayashi I."/>
            <person name="Kong H."/>
            <person name="Krueger D.H."/>
            <person name="Lacks S."/>
            <person name="Marinus M.G."/>
            <person name="Miyahara M."/>
            <person name="Morgan R.D."/>
            <person name="Murray N.E."/>
            <person name="Nagaraja V."/>
            <person name="Piekarowicz A."/>
            <person name="Pingoud A."/>
            <person name="Raleigh E."/>
            <person name="Rao D.N."/>
            <person name="Reich N."/>
            <person name="Repin V.E."/>
            <person name="Selker E.U."/>
            <person name="Shaw P.C."/>
            <person name="Stein D.C."/>
            <person name="Stoddard B.L."/>
            <person name="Szybalski W."/>
            <person name="Trautner T.A."/>
            <person name="Van Etten J.L."/>
            <person name="Vitor J.M."/>
            <person name="Wilson G.G."/>
            <person name="Xu S.Y."/>
        </authorList>
    </citation>
    <scope>NOMENCLATURE</scope>
    <scope>SUBTYPE</scope>
</reference>
<comment type="function">
    <text evidence="1 2">A P subtype restriction enzyme that recognizes the double-stranded sequence 5'-CCGG-3' and cleaves after C-1.</text>
</comment>
<comment type="catalytic activity">
    <reaction evidence="1">
        <text>Endonucleolytic cleavage of DNA to give specific double-stranded fragments with terminal 5'-phosphates.</text>
        <dbReference type="EC" id="3.1.21.4"/>
    </reaction>
</comment>
<comment type="cofactor">
    <cofactor>
        <name>Mg(2+)</name>
        <dbReference type="ChEBI" id="CHEBI:18420"/>
    </cofactor>
</comment>
<comment type="subunit">
    <text evidence="4">Homodimer.</text>
</comment>
<organism>
    <name type="scientific">Bacillus subtilis</name>
    <dbReference type="NCBI Taxonomy" id="1423"/>
    <lineage>
        <taxon>Bacteria</taxon>
        <taxon>Bacillati</taxon>
        <taxon>Bacillota</taxon>
        <taxon>Bacilli</taxon>
        <taxon>Bacillales</taxon>
        <taxon>Bacillaceae</taxon>
        <taxon>Bacillus</taxon>
    </lineage>
</organism>
<sequence>MNKDNQIKNESGKQAKILVSEIVNNLKNELGINIEIEEGYSIGYPNQEKQFKMDFLVQFTDFDNEQWLIKSTNSIRERIYGTEFFAQNIRLIDEKVKNIYVVVPDSISSAEMKKKRNYSVKINGTTYTSFLTDVLTVNELRQKIVEKASQNIAQGLRANVLGNDAETSIVNLLNDLKNKALWNDYQNAQQTIKSSTYKIYKEILEKIDLKEGFDKILEVTATNDIPLLSNRGKPKTDVSVTIKTNTKELIRNISIKNTREKTVTIHEGSVSDLISRLKLSETDPLSQALIHFEKVGSKKKLIAEHPNSDKILEENLKLYNRELIEFLHSPLLNDKIQMVDLIIFTNKFAVWNRDDYIKHYIEEYSGKGQFGTPFKWTYPSKKRGQKIQIKGFSNN</sequence>
<feature type="chain" id="PRO_0000077291" description="Type II restriction enzyme BsuFI">
    <location>
        <begin position="1"/>
        <end position="395"/>
    </location>
</feature>
<gene>
    <name type="primary">hsdFR</name>
    <name type="synonym">hsrF</name>
</gene>
<dbReference type="EC" id="3.1.21.4" evidence="1"/>
<dbReference type="EMBL" id="X62104">
    <property type="protein sequence ID" value="CAA44014.1"/>
    <property type="molecule type" value="Genomic_DNA"/>
</dbReference>
<dbReference type="PIR" id="S20059">
    <property type="entry name" value="S20059"/>
</dbReference>
<dbReference type="SMR" id="P25217"/>
<dbReference type="REBASE" id="203787">
    <property type="entry name" value="Bsu1444ORF756P"/>
</dbReference>
<dbReference type="REBASE" id="203790">
    <property type="entry name" value="Bsu757ORF755P"/>
</dbReference>
<dbReference type="REBASE" id="205273">
    <property type="entry name" value="Bsu761ORF757P"/>
</dbReference>
<dbReference type="REBASE" id="205286">
    <property type="entry name" value="Bsu333ORF764P"/>
</dbReference>
<dbReference type="REBASE" id="618">
    <property type="entry name" value="BsuFI"/>
</dbReference>
<dbReference type="PRO" id="PR:P25217"/>
<dbReference type="GO" id="GO:0003677">
    <property type="term" value="F:DNA binding"/>
    <property type="evidence" value="ECO:0007669"/>
    <property type="project" value="InterPro"/>
</dbReference>
<dbReference type="GO" id="GO:0009036">
    <property type="term" value="F:type II site-specific deoxyribonuclease activity"/>
    <property type="evidence" value="ECO:0007669"/>
    <property type="project" value="UniProtKB-EC"/>
</dbReference>
<dbReference type="GO" id="GO:0009307">
    <property type="term" value="P:DNA restriction-modification system"/>
    <property type="evidence" value="ECO:0007669"/>
    <property type="project" value="UniProtKB-KW"/>
</dbReference>
<dbReference type="InterPro" id="IPR011335">
    <property type="entry name" value="Restrct_endonuc-II-like"/>
</dbReference>
<dbReference type="InterPro" id="IPR015291">
    <property type="entry name" value="Restrct_endonuc_II_MspI"/>
</dbReference>
<dbReference type="Pfam" id="PF09208">
    <property type="entry name" value="Endonuc-MspI"/>
    <property type="match status" value="1"/>
</dbReference>
<dbReference type="SUPFAM" id="SSF52980">
    <property type="entry name" value="Restriction endonuclease-like"/>
    <property type="match status" value="1"/>
</dbReference>
<keyword id="KW-0903">Direct protein sequencing</keyword>
<keyword id="KW-0255">Endonuclease</keyword>
<keyword id="KW-0378">Hydrolase</keyword>
<keyword id="KW-0460">Magnesium</keyword>
<keyword id="KW-0540">Nuclease</keyword>
<keyword id="KW-0680">Restriction system</keyword>
<protein>
    <recommendedName>
        <fullName evidence="2">Type II restriction enzyme BsuFI</fullName>
        <shortName evidence="3">R.BsuFI</shortName>
        <ecNumber evidence="1">3.1.21.4</ecNumber>
    </recommendedName>
    <alternativeName>
        <fullName>Endonuclease BsuFI</fullName>
    </alternativeName>
    <alternativeName>
        <fullName>Type-2 restriction enzyme BsuFI</fullName>
    </alternativeName>
</protein>
<accession>P25217</accession>